<dbReference type="EC" id="2.8.1.4" evidence="1"/>
<dbReference type="EMBL" id="FM204883">
    <property type="protein sequence ID" value="CAW93573.1"/>
    <property type="molecule type" value="Genomic_DNA"/>
</dbReference>
<dbReference type="RefSeq" id="WP_012679446.1">
    <property type="nucleotide sequence ID" value="NC_012471.1"/>
</dbReference>
<dbReference type="SMR" id="C0M8U4"/>
<dbReference type="KEGG" id="seu:SEQ_0997"/>
<dbReference type="HOGENOM" id="CLU_037952_4_0_9"/>
<dbReference type="OrthoDB" id="9773948at2"/>
<dbReference type="UniPathway" id="UPA00060"/>
<dbReference type="Proteomes" id="UP000001365">
    <property type="component" value="Chromosome"/>
</dbReference>
<dbReference type="GO" id="GO:0005829">
    <property type="term" value="C:cytosol"/>
    <property type="evidence" value="ECO:0007669"/>
    <property type="project" value="TreeGrafter"/>
</dbReference>
<dbReference type="GO" id="GO:0005524">
    <property type="term" value="F:ATP binding"/>
    <property type="evidence" value="ECO:0007669"/>
    <property type="project" value="UniProtKB-UniRule"/>
</dbReference>
<dbReference type="GO" id="GO:0004810">
    <property type="term" value="F:CCA tRNA nucleotidyltransferase activity"/>
    <property type="evidence" value="ECO:0007669"/>
    <property type="project" value="InterPro"/>
</dbReference>
<dbReference type="GO" id="GO:0000049">
    <property type="term" value="F:tRNA binding"/>
    <property type="evidence" value="ECO:0007669"/>
    <property type="project" value="UniProtKB-UniRule"/>
</dbReference>
<dbReference type="GO" id="GO:0140741">
    <property type="term" value="F:tRNA-uracil-4 sulfurtransferase activity"/>
    <property type="evidence" value="ECO:0007669"/>
    <property type="project" value="UniProtKB-EC"/>
</dbReference>
<dbReference type="GO" id="GO:0009228">
    <property type="term" value="P:thiamine biosynthetic process"/>
    <property type="evidence" value="ECO:0007669"/>
    <property type="project" value="UniProtKB-KW"/>
</dbReference>
<dbReference type="GO" id="GO:0009229">
    <property type="term" value="P:thiamine diphosphate biosynthetic process"/>
    <property type="evidence" value="ECO:0007669"/>
    <property type="project" value="UniProtKB-UniRule"/>
</dbReference>
<dbReference type="GO" id="GO:0052837">
    <property type="term" value="P:thiazole biosynthetic process"/>
    <property type="evidence" value="ECO:0007669"/>
    <property type="project" value="TreeGrafter"/>
</dbReference>
<dbReference type="GO" id="GO:0002937">
    <property type="term" value="P:tRNA 4-thiouridine biosynthesis"/>
    <property type="evidence" value="ECO:0007669"/>
    <property type="project" value="TreeGrafter"/>
</dbReference>
<dbReference type="CDD" id="cd01712">
    <property type="entry name" value="PPase_ThiI"/>
    <property type="match status" value="1"/>
</dbReference>
<dbReference type="CDD" id="cd11716">
    <property type="entry name" value="THUMP_ThiI"/>
    <property type="match status" value="1"/>
</dbReference>
<dbReference type="FunFam" id="3.40.50.620:FF:000053">
    <property type="entry name" value="Probable tRNA sulfurtransferase"/>
    <property type="match status" value="1"/>
</dbReference>
<dbReference type="Gene3D" id="3.30.2130.30">
    <property type="match status" value="1"/>
</dbReference>
<dbReference type="Gene3D" id="3.40.50.620">
    <property type="entry name" value="HUPs"/>
    <property type="match status" value="1"/>
</dbReference>
<dbReference type="HAMAP" id="MF_00021">
    <property type="entry name" value="ThiI"/>
    <property type="match status" value="1"/>
</dbReference>
<dbReference type="InterPro" id="IPR014729">
    <property type="entry name" value="Rossmann-like_a/b/a_fold"/>
</dbReference>
<dbReference type="InterPro" id="IPR020536">
    <property type="entry name" value="ThiI_AANH"/>
</dbReference>
<dbReference type="InterPro" id="IPR054173">
    <property type="entry name" value="ThiI_fer"/>
</dbReference>
<dbReference type="InterPro" id="IPR049961">
    <property type="entry name" value="ThiI_N"/>
</dbReference>
<dbReference type="InterPro" id="IPR004114">
    <property type="entry name" value="THUMP_dom"/>
</dbReference>
<dbReference type="InterPro" id="IPR049962">
    <property type="entry name" value="THUMP_ThiI"/>
</dbReference>
<dbReference type="InterPro" id="IPR003720">
    <property type="entry name" value="tRNA_STrfase"/>
</dbReference>
<dbReference type="InterPro" id="IPR050102">
    <property type="entry name" value="tRNA_sulfurtransferase_ThiI"/>
</dbReference>
<dbReference type="NCBIfam" id="TIGR00342">
    <property type="entry name" value="tRNA uracil 4-sulfurtransferase ThiI"/>
    <property type="match status" value="1"/>
</dbReference>
<dbReference type="PANTHER" id="PTHR43209">
    <property type="entry name" value="TRNA SULFURTRANSFERASE"/>
    <property type="match status" value="1"/>
</dbReference>
<dbReference type="PANTHER" id="PTHR43209:SF1">
    <property type="entry name" value="TRNA SULFURTRANSFERASE"/>
    <property type="match status" value="1"/>
</dbReference>
<dbReference type="Pfam" id="PF02568">
    <property type="entry name" value="ThiI"/>
    <property type="match status" value="1"/>
</dbReference>
<dbReference type="Pfam" id="PF22025">
    <property type="entry name" value="ThiI_fer"/>
    <property type="match status" value="1"/>
</dbReference>
<dbReference type="Pfam" id="PF02926">
    <property type="entry name" value="THUMP"/>
    <property type="match status" value="1"/>
</dbReference>
<dbReference type="SMART" id="SM00981">
    <property type="entry name" value="THUMP"/>
    <property type="match status" value="1"/>
</dbReference>
<dbReference type="SUPFAM" id="SSF52402">
    <property type="entry name" value="Adenine nucleotide alpha hydrolases-like"/>
    <property type="match status" value="1"/>
</dbReference>
<dbReference type="SUPFAM" id="SSF143437">
    <property type="entry name" value="THUMP domain-like"/>
    <property type="match status" value="1"/>
</dbReference>
<dbReference type="PROSITE" id="PS51165">
    <property type="entry name" value="THUMP"/>
    <property type="match status" value="1"/>
</dbReference>
<organism>
    <name type="scientific">Streptococcus equi subsp. equi (strain 4047)</name>
    <dbReference type="NCBI Taxonomy" id="553482"/>
    <lineage>
        <taxon>Bacteria</taxon>
        <taxon>Bacillati</taxon>
        <taxon>Bacillota</taxon>
        <taxon>Bacilli</taxon>
        <taxon>Lactobacillales</taxon>
        <taxon>Streptococcaceae</taxon>
        <taxon>Streptococcus</taxon>
    </lineage>
</organism>
<sequence>MKYSEIMVRHGELSTKGKNRMRFINRLKANIQDVLSAYSEVTVRSTRDRTHVLLNGADDRSVIEALKPVFGIQGLSPVYKVEKSVPVLIAAVQEIMSSLYREGLTFKISSKRSDHQFELDSRDLNHTLGAAVFEALPHIKAQMKNPDVTLKVEIRDEAAYLSHEDIKGAGGLPVGASGKGMLMLSGGIDSPVAGYLSLKRGVEIEAVHFASPPYTSPGALRKAKDLTQRLTRFGGNIQFIEVPFTEIQEEIKHKAPEAYLMTLTRRFMLRITDAIREKRKALVIINGESLGQVASQTLESMQAINAVTSTPIIRPVVAMDKLEIIDIAQQIDTFDISIQPFEDCCTIFAPDRPKTNPKLANVERYESRFDVDGLVERAVAGIRVTEITPEIETDSLSTLIEELL</sequence>
<evidence type="ECO:0000255" key="1">
    <source>
        <dbReference type="HAMAP-Rule" id="MF_00021"/>
    </source>
</evidence>
<keyword id="KW-0067">ATP-binding</keyword>
<keyword id="KW-0963">Cytoplasm</keyword>
<keyword id="KW-0547">Nucleotide-binding</keyword>
<keyword id="KW-0694">RNA-binding</keyword>
<keyword id="KW-0784">Thiamine biosynthesis</keyword>
<keyword id="KW-0808">Transferase</keyword>
<keyword id="KW-0820">tRNA-binding</keyword>
<name>THII_STRE4</name>
<feature type="chain" id="PRO_1000196932" description="Probable tRNA sulfurtransferase">
    <location>
        <begin position="1"/>
        <end position="404"/>
    </location>
</feature>
<feature type="domain" description="THUMP" evidence="1">
    <location>
        <begin position="60"/>
        <end position="165"/>
    </location>
</feature>
<feature type="binding site" evidence="1">
    <location>
        <begin position="183"/>
        <end position="184"/>
    </location>
    <ligand>
        <name>ATP</name>
        <dbReference type="ChEBI" id="CHEBI:30616"/>
    </ligand>
</feature>
<feature type="binding site" evidence="1">
    <location>
        <begin position="208"/>
        <end position="209"/>
    </location>
    <ligand>
        <name>ATP</name>
        <dbReference type="ChEBI" id="CHEBI:30616"/>
    </ligand>
</feature>
<feature type="binding site" evidence="1">
    <location>
        <position position="265"/>
    </location>
    <ligand>
        <name>ATP</name>
        <dbReference type="ChEBI" id="CHEBI:30616"/>
    </ligand>
</feature>
<feature type="binding site" evidence="1">
    <location>
        <position position="287"/>
    </location>
    <ligand>
        <name>ATP</name>
        <dbReference type="ChEBI" id="CHEBI:30616"/>
    </ligand>
</feature>
<feature type="binding site" evidence="1">
    <location>
        <position position="296"/>
    </location>
    <ligand>
        <name>ATP</name>
        <dbReference type="ChEBI" id="CHEBI:30616"/>
    </ligand>
</feature>
<reference key="1">
    <citation type="journal article" date="2009" name="PLoS Pathog.">
        <title>Genomic evidence for the evolution of Streptococcus equi: host restriction, increased virulence, and genetic exchange with human pathogens.</title>
        <authorList>
            <person name="Holden M.T.G."/>
            <person name="Heather Z."/>
            <person name="Paillot R."/>
            <person name="Steward K.F."/>
            <person name="Webb K."/>
            <person name="Ainslie F."/>
            <person name="Jourdan T."/>
            <person name="Bason N.C."/>
            <person name="Holroyd N.E."/>
            <person name="Mungall K."/>
            <person name="Quail M.A."/>
            <person name="Sanders M."/>
            <person name="Simmonds M."/>
            <person name="Willey D."/>
            <person name="Brooks K."/>
            <person name="Aanensen D.M."/>
            <person name="Spratt B.G."/>
            <person name="Jolley K.A."/>
            <person name="Maiden M.C.J."/>
            <person name="Kehoe M."/>
            <person name="Chanter N."/>
            <person name="Bentley S.D."/>
            <person name="Robinson C."/>
            <person name="Maskell D.J."/>
            <person name="Parkhill J."/>
            <person name="Waller A.S."/>
        </authorList>
    </citation>
    <scope>NUCLEOTIDE SEQUENCE [LARGE SCALE GENOMIC DNA]</scope>
    <source>
        <strain>4047</strain>
    </source>
</reference>
<accession>C0M8U4</accession>
<gene>
    <name evidence="1" type="primary">thiI</name>
    <name type="ordered locus">SEQ_0997</name>
</gene>
<comment type="function">
    <text evidence="1">Catalyzes the ATP-dependent transfer of a sulfur to tRNA to produce 4-thiouridine in position 8 of tRNAs, which functions as a near-UV photosensor. Also catalyzes the transfer of sulfur to the sulfur carrier protein ThiS, forming ThiS-thiocarboxylate. This is a step in the synthesis of thiazole, in the thiamine biosynthesis pathway. The sulfur is donated as persulfide by IscS.</text>
</comment>
<comment type="catalytic activity">
    <reaction evidence="1">
        <text>[ThiI sulfur-carrier protein]-S-sulfanyl-L-cysteine + a uridine in tRNA + 2 reduced [2Fe-2S]-[ferredoxin] + ATP + H(+) = [ThiI sulfur-carrier protein]-L-cysteine + a 4-thiouridine in tRNA + 2 oxidized [2Fe-2S]-[ferredoxin] + AMP + diphosphate</text>
        <dbReference type="Rhea" id="RHEA:24176"/>
        <dbReference type="Rhea" id="RHEA-COMP:10000"/>
        <dbReference type="Rhea" id="RHEA-COMP:10001"/>
        <dbReference type="Rhea" id="RHEA-COMP:13337"/>
        <dbReference type="Rhea" id="RHEA-COMP:13338"/>
        <dbReference type="Rhea" id="RHEA-COMP:13339"/>
        <dbReference type="Rhea" id="RHEA-COMP:13340"/>
        <dbReference type="ChEBI" id="CHEBI:15378"/>
        <dbReference type="ChEBI" id="CHEBI:29950"/>
        <dbReference type="ChEBI" id="CHEBI:30616"/>
        <dbReference type="ChEBI" id="CHEBI:33019"/>
        <dbReference type="ChEBI" id="CHEBI:33737"/>
        <dbReference type="ChEBI" id="CHEBI:33738"/>
        <dbReference type="ChEBI" id="CHEBI:61963"/>
        <dbReference type="ChEBI" id="CHEBI:65315"/>
        <dbReference type="ChEBI" id="CHEBI:136798"/>
        <dbReference type="ChEBI" id="CHEBI:456215"/>
        <dbReference type="EC" id="2.8.1.4"/>
    </reaction>
</comment>
<comment type="catalytic activity">
    <reaction evidence="1">
        <text>[ThiS sulfur-carrier protein]-C-terminal Gly-Gly-AMP + S-sulfanyl-L-cysteinyl-[cysteine desulfurase] + AH2 = [ThiS sulfur-carrier protein]-C-terminal-Gly-aminoethanethioate + L-cysteinyl-[cysteine desulfurase] + A + AMP + 2 H(+)</text>
        <dbReference type="Rhea" id="RHEA:43340"/>
        <dbReference type="Rhea" id="RHEA-COMP:12157"/>
        <dbReference type="Rhea" id="RHEA-COMP:12158"/>
        <dbReference type="Rhea" id="RHEA-COMP:12910"/>
        <dbReference type="Rhea" id="RHEA-COMP:19908"/>
        <dbReference type="ChEBI" id="CHEBI:13193"/>
        <dbReference type="ChEBI" id="CHEBI:15378"/>
        <dbReference type="ChEBI" id="CHEBI:17499"/>
        <dbReference type="ChEBI" id="CHEBI:29950"/>
        <dbReference type="ChEBI" id="CHEBI:61963"/>
        <dbReference type="ChEBI" id="CHEBI:90618"/>
        <dbReference type="ChEBI" id="CHEBI:232372"/>
        <dbReference type="ChEBI" id="CHEBI:456215"/>
    </reaction>
</comment>
<comment type="pathway">
    <text evidence="1">Cofactor biosynthesis; thiamine diphosphate biosynthesis.</text>
</comment>
<comment type="subcellular location">
    <subcellularLocation>
        <location evidence="1">Cytoplasm</location>
    </subcellularLocation>
</comment>
<comment type="similarity">
    <text evidence="1">Belongs to the ThiI family.</text>
</comment>
<protein>
    <recommendedName>
        <fullName evidence="1">Probable tRNA sulfurtransferase</fullName>
        <ecNumber evidence="1">2.8.1.4</ecNumber>
    </recommendedName>
    <alternativeName>
        <fullName evidence="1">Sulfur carrier protein ThiS sulfurtransferase</fullName>
    </alternativeName>
    <alternativeName>
        <fullName evidence="1">Thiamine biosynthesis protein ThiI</fullName>
    </alternativeName>
    <alternativeName>
        <fullName evidence="1">tRNA 4-thiouridine synthase</fullName>
    </alternativeName>
</protein>
<proteinExistence type="inferred from homology"/>